<keyword id="KW-1003">Cell membrane</keyword>
<keyword id="KW-0472">Membrane</keyword>
<keyword id="KW-0653">Protein transport</keyword>
<keyword id="KW-0811">Translocation</keyword>
<keyword id="KW-0812">Transmembrane</keyword>
<keyword id="KW-1133">Transmembrane helix</keyword>
<keyword id="KW-0813">Transport</keyword>
<evidence type="ECO:0000250" key="1"/>
<evidence type="ECO:0000255" key="2"/>
<evidence type="ECO:0000305" key="3"/>
<name>SECG_RICTY</name>
<feature type="chain" id="PRO_0000286510" description="Protein-export membrane protein SecG">
    <location>
        <begin position="1"/>
        <end position="100"/>
    </location>
</feature>
<feature type="transmembrane region" description="Helical" evidence="2">
    <location>
        <begin position="1"/>
        <end position="21"/>
    </location>
</feature>
<feature type="transmembrane region" description="Helical" evidence="2">
    <location>
        <begin position="54"/>
        <end position="74"/>
    </location>
</feature>
<organism>
    <name type="scientific">Rickettsia typhi (strain ATCC VR-144 / Wilmington)</name>
    <dbReference type="NCBI Taxonomy" id="257363"/>
    <lineage>
        <taxon>Bacteria</taxon>
        <taxon>Pseudomonadati</taxon>
        <taxon>Pseudomonadota</taxon>
        <taxon>Alphaproteobacteria</taxon>
        <taxon>Rickettsiales</taxon>
        <taxon>Rickettsiaceae</taxon>
        <taxon>Rickettsieae</taxon>
        <taxon>Rickettsia</taxon>
        <taxon>typhus group</taxon>
    </lineage>
</organism>
<dbReference type="EMBL" id="AE017197">
    <property type="protein sequence ID" value="AAU03540.1"/>
    <property type="molecule type" value="Genomic_DNA"/>
</dbReference>
<dbReference type="RefSeq" id="WP_011190527.1">
    <property type="nucleotide sequence ID" value="NC_006142.1"/>
</dbReference>
<dbReference type="SMR" id="Q68XV2"/>
<dbReference type="KEGG" id="rty:RT0053"/>
<dbReference type="eggNOG" id="COG1314">
    <property type="taxonomic scope" value="Bacteria"/>
</dbReference>
<dbReference type="HOGENOM" id="CLU_094156_4_2_5"/>
<dbReference type="Proteomes" id="UP000000604">
    <property type="component" value="Chromosome"/>
</dbReference>
<dbReference type="GO" id="GO:0005886">
    <property type="term" value="C:plasma membrane"/>
    <property type="evidence" value="ECO:0007669"/>
    <property type="project" value="UniProtKB-SubCell"/>
</dbReference>
<dbReference type="GO" id="GO:0015450">
    <property type="term" value="F:protein-transporting ATPase activity"/>
    <property type="evidence" value="ECO:0007669"/>
    <property type="project" value="InterPro"/>
</dbReference>
<dbReference type="GO" id="GO:0065002">
    <property type="term" value="P:intracellular protein transmembrane transport"/>
    <property type="evidence" value="ECO:0007669"/>
    <property type="project" value="TreeGrafter"/>
</dbReference>
<dbReference type="GO" id="GO:0009306">
    <property type="term" value="P:protein secretion"/>
    <property type="evidence" value="ECO:0007669"/>
    <property type="project" value="InterPro"/>
</dbReference>
<dbReference type="GO" id="GO:0043952">
    <property type="term" value="P:protein transport by the Sec complex"/>
    <property type="evidence" value="ECO:0007669"/>
    <property type="project" value="TreeGrafter"/>
</dbReference>
<dbReference type="InterPro" id="IPR004692">
    <property type="entry name" value="SecG"/>
</dbReference>
<dbReference type="NCBIfam" id="TIGR00810">
    <property type="entry name" value="secG"/>
    <property type="match status" value="1"/>
</dbReference>
<dbReference type="PANTHER" id="PTHR34182">
    <property type="entry name" value="PROTEIN-EXPORT MEMBRANE PROTEIN SECG"/>
    <property type="match status" value="1"/>
</dbReference>
<dbReference type="PANTHER" id="PTHR34182:SF1">
    <property type="entry name" value="PROTEIN-EXPORT MEMBRANE PROTEIN SECG"/>
    <property type="match status" value="1"/>
</dbReference>
<dbReference type="Pfam" id="PF03840">
    <property type="entry name" value="SecG"/>
    <property type="match status" value="1"/>
</dbReference>
<dbReference type="PRINTS" id="PR01651">
    <property type="entry name" value="SECGEXPORT"/>
</dbReference>
<proteinExistence type="inferred from homology"/>
<gene>
    <name type="primary">secG</name>
    <name type="ordered locus">RT0053</name>
</gene>
<comment type="function">
    <text evidence="1">Involved in protein export. Participates in an early event of protein translocation (By similarity).</text>
</comment>
<comment type="subcellular location">
    <subcellularLocation>
        <location evidence="1">Cell membrane</location>
        <topology evidence="1">Multi-pass membrane protein</topology>
    </subcellularLocation>
</comment>
<comment type="similarity">
    <text evidence="3">Belongs to the SecG family.</text>
</comment>
<reference key="1">
    <citation type="journal article" date="2004" name="J. Bacteriol.">
        <title>Complete genome sequence of Rickettsia typhi and comparison with sequences of other Rickettsiae.</title>
        <authorList>
            <person name="McLeod M.P."/>
            <person name="Qin X."/>
            <person name="Karpathy S.E."/>
            <person name="Gioia J."/>
            <person name="Highlander S.K."/>
            <person name="Fox G.E."/>
            <person name="McNeill T.Z."/>
            <person name="Jiang H."/>
            <person name="Muzny D."/>
            <person name="Jacob L.S."/>
            <person name="Hawes A.C."/>
            <person name="Sodergren E."/>
            <person name="Gill R."/>
            <person name="Hume J."/>
            <person name="Morgan M."/>
            <person name="Fan G."/>
            <person name="Amin A.G."/>
            <person name="Gibbs R.A."/>
            <person name="Hong C."/>
            <person name="Yu X.-J."/>
            <person name="Walker D.H."/>
            <person name="Weinstock G.M."/>
        </authorList>
    </citation>
    <scope>NUCLEOTIDE SEQUENCE [LARGE SCALE GENOMIC DNA]</scope>
    <source>
        <strain>ATCC VR-144 / Wilmington</strain>
    </source>
</reference>
<accession>Q68XV2</accession>
<sequence length="100" mass="10682">MLDILLFVHITISILLIIVILMQRSGSGGISGISGDNNMGVVSAKTVGNFLSKSTIILTTLFLINAIILANLSSKKKSNLVSKINEIEENQTDNSLPIAK</sequence>
<protein>
    <recommendedName>
        <fullName>Protein-export membrane protein SecG</fullName>
    </recommendedName>
</protein>